<name>RIR2_CHLTR</name>
<feature type="chain" id="PRO_0000190475" description="Ribonucleoside-diphosphate reductase subunit beta">
    <location>
        <begin position="1"/>
        <end position="346"/>
    </location>
</feature>
<feature type="active site" evidence="1">
    <location>
        <position position="129"/>
    </location>
</feature>
<feature type="binding site" evidence="1">
    <location>
        <position position="89"/>
    </location>
    <ligand>
        <name>Fe cation</name>
        <dbReference type="ChEBI" id="CHEBI:24875"/>
        <label>1</label>
    </ligand>
</feature>
<feature type="binding site" evidence="1">
    <location>
        <position position="120"/>
    </location>
    <ligand>
        <name>Fe cation</name>
        <dbReference type="ChEBI" id="CHEBI:24875"/>
        <label>1</label>
    </ligand>
</feature>
<feature type="binding site" evidence="1">
    <location>
        <position position="120"/>
    </location>
    <ligand>
        <name>Fe cation</name>
        <dbReference type="ChEBI" id="CHEBI:24875"/>
        <label>2</label>
    </ligand>
</feature>
<feature type="binding site" evidence="1">
    <location>
        <position position="123"/>
    </location>
    <ligand>
        <name>Fe cation</name>
        <dbReference type="ChEBI" id="CHEBI:24875"/>
        <label>1</label>
    </ligand>
</feature>
<feature type="binding site" evidence="1">
    <location>
        <position position="193"/>
    </location>
    <ligand>
        <name>Fe cation</name>
        <dbReference type="ChEBI" id="CHEBI:24875"/>
        <label>2</label>
    </ligand>
</feature>
<feature type="binding site" evidence="1">
    <location>
        <position position="227"/>
    </location>
    <ligand>
        <name>Fe cation</name>
        <dbReference type="ChEBI" id="CHEBI:24875"/>
        <label>2</label>
    </ligand>
</feature>
<feature type="binding site" evidence="1">
    <location>
        <position position="230"/>
    </location>
    <ligand>
        <name>Fe cation</name>
        <dbReference type="ChEBI" id="CHEBI:24875"/>
        <label>2</label>
    </ligand>
</feature>
<feature type="helix" evidence="4">
    <location>
        <begin position="6"/>
        <end position="11"/>
    </location>
</feature>
<feature type="helix" evidence="4">
    <location>
        <begin position="15"/>
        <end position="17"/>
    </location>
</feature>
<feature type="strand" evidence="4">
    <location>
        <begin position="20"/>
        <end position="22"/>
    </location>
</feature>
<feature type="helix" evidence="4">
    <location>
        <begin position="37"/>
        <end position="47"/>
    </location>
</feature>
<feature type="helix" evidence="4">
    <location>
        <begin position="53"/>
        <end position="55"/>
    </location>
</feature>
<feature type="helix" evidence="4">
    <location>
        <begin position="59"/>
        <end position="66"/>
    </location>
</feature>
<feature type="helix" evidence="4">
    <location>
        <begin position="72"/>
        <end position="98"/>
    </location>
</feature>
<feature type="helix" evidence="4">
    <location>
        <begin position="101"/>
        <end position="103"/>
    </location>
</feature>
<feature type="helix" evidence="4">
    <location>
        <begin position="107"/>
        <end position="134"/>
    </location>
</feature>
<feature type="helix" evidence="4">
    <location>
        <begin position="138"/>
        <end position="142"/>
    </location>
</feature>
<feature type="helix" evidence="4">
    <location>
        <begin position="144"/>
        <end position="147"/>
    </location>
</feature>
<feature type="helix" evidence="4">
    <location>
        <begin position="149"/>
        <end position="161"/>
    </location>
</feature>
<feature type="helix" evidence="4">
    <location>
        <begin position="163"/>
        <end position="166"/>
    </location>
</feature>
<feature type="strand" evidence="3">
    <location>
        <begin position="172"/>
        <end position="174"/>
    </location>
</feature>
<feature type="helix" evidence="4">
    <location>
        <begin position="175"/>
        <end position="189"/>
    </location>
</feature>
<feature type="helix" evidence="4">
    <location>
        <begin position="190"/>
        <end position="196"/>
    </location>
</feature>
<feature type="helix" evidence="4">
    <location>
        <begin position="198"/>
        <end position="209"/>
    </location>
</feature>
<feature type="helix" evidence="4">
    <location>
        <begin position="214"/>
        <end position="244"/>
    </location>
</feature>
<feature type="helix" evidence="4">
    <location>
        <begin position="246"/>
        <end position="248"/>
    </location>
</feature>
<feature type="helix" evidence="4">
    <location>
        <begin position="251"/>
        <end position="275"/>
    </location>
</feature>
<feature type="helix" evidence="4">
    <location>
        <begin position="285"/>
        <end position="302"/>
    </location>
</feature>
<feature type="helix" evidence="4">
    <location>
        <begin position="316"/>
        <end position="319"/>
    </location>
</feature>
<comment type="function">
    <text evidence="1">Provides the precursors necessary for DNA synthesis. Catalyzes the biosynthesis of deoxyribonucleotides from the corresponding ribonucleotides (By similarity).</text>
</comment>
<comment type="catalytic activity">
    <reaction>
        <text>a 2'-deoxyribonucleoside 5'-diphosphate + [thioredoxin]-disulfide + H2O = a ribonucleoside 5'-diphosphate + [thioredoxin]-dithiol</text>
        <dbReference type="Rhea" id="RHEA:23252"/>
        <dbReference type="Rhea" id="RHEA-COMP:10698"/>
        <dbReference type="Rhea" id="RHEA-COMP:10700"/>
        <dbReference type="ChEBI" id="CHEBI:15377"/>
        <dbReference type="ChEBI" id="CHEBI:29950"/>
        <dbReference type="ChEBI" id="CHEBI:50058"/>
        <dbReference type="ChEBI" id="CHEBI:57930"/>
        <dbReference type="ChEBI" id="CHEBI:73316"/>
        <dbReference type="EC" id="1.17.4.1"/>
    </reaction>
</comment>
<comment type="cofactor">
    <cofactor evidence="1">
        <name>Fe cation</name>
        <dbReference type="ChEBI" id="CHEBI:24875"/>
    </cofactor>
    <text evidence="1">Binds 2 iron ions per subunit.</text>
</comment>
<comment type="subunit">
    <text evidence="1">Tetramer of two alpha and two beta subunits.</text>
</comment>
<comment type="similarity">
    <text evidence="2">Belongs to the ribonucleoside diphosphate reductase small chain family.</text>
</comment>
<keyword id="KW-0002">3D-structure</keyword>
<keyword id="KW-0215">Deoxyribonucleotide synthesis</keyword>
<keyword id="KW-0408">Iron</keyword>
<keyword id="KW-0479">Metal-binding</keyword>
<keyword id="KW-0560">Oxidoreductase</keyword>
<keyword id="KW-1185">Reference proteome</keyword>
<organism>
    <name type="scientific">Chlamydia trachomatis serovar D (strain ATCC VR-885 / DSM 19411 / UW-3/Cx)</name>
    <dbReference type="NCBI Taxonomy" id="272561"/>
    <lineage>
        <taxon>Bacteria</taxon>
        <taxon>Pseudomonadati</taxon>
        <taxon>Chlamydiota</taxon>
        <taxon>Chlamydiia</taxon>
        <taxon>Chlamydiales</taxon>
        <taxon>Chlamydiaceae</taxon>
        <taxon>Chlamydia/Chlamydophila group</taxon>
        <taxon>Chlamydia</taxon>
    </lineage>
</organism>
<dbReference type="EC" id="1.17.4.1"/>
<dbReference type="EMBL" id="AE001273">
    <property type="protein sequence ID" value="AAC68425.1"/>
    <property type="molecule type" value="Genomic_DNA"/>
</dbReference>
<dbReference type="PIR" id="E71466">
    <property type="entry name" value="E71466"/>
</dbReference>
<dbReference type="RefSeq" id="NP_220349.1">
    <property type="nucleotide sequence ID" value="NC_000117.1"/>
</dbReference>
<dbReference type="RefSeq" id="WP_009872214.1">
    <property type="nucleotide sequence ID" value="NC_000117.1"/>
</dbReference>
<dbReference type="PDB" id="1SYY">
    <property type="method" value="X-ray"/>
    <property type="resolution" value="1.70 A"/>
    <property type="chains" value="A=1-346"/>
</dbReference>
<dbReference type="PDB" id="2ANI">
    <property type="method" value="X-ray"/>
    <property type="resolution" value="2.00 A"/>
    <property type="chains" value="A=1-346"/>
</dbReference>
<dbReference type="PDB" id="4D8F">
    <property type="method" value="X-ray"/>
    <property type="resolution" value="2.20 A"/>
    <property type="chains" value="A/B/C/D=1-346"/>
</dbReference>
<dbReference type="PDB" id="4D8G">
    <property type="method" value="X-ray"/>
    <property type="resolution" value="1.75 A"/>
    <property type="chains" value="A/B/C/D=1-346"/>
</dbReference>
<dbReference type="PDB" id="4M1H">
    <property type="method" value="X-ray"/>
    <property type="resolution" value="1.70 A"/>
    <property type="chains" value="A/B/C/D=1-346"/>
</dbReference>
<dbReference type="PDB" id="4M1I">
    <property type="method" value="X-ray"/>
    <property type="resolution" value="1.80 A"/>
    <property type="chains" value="A/B/C/D=1-346"/>
</dbReference>
<dbReference type="PDBsum" id="1SYY"/>
<dbReference type="PDBsum" id="2ANI"/>
<dbReference type="PDBsum" id="4D8F"/>
<dbReference type="PDBsum" id="4D8G"/>
<dbReference type="PDBsum" id="4M1H"/>
<dbReference type="PDBsum" id="4M1I"/>
<dbReference type="SMR" id="O84835"/>
<dbReference type="FunCoup" id="O84835">
    <property type="interactions" value="160"/>
</dbReference>
<dbReference type="STRING" id="272561.CT_828"/>
<dbReference type="EnsemblBacteria" id="AAC68425">
    <property type="protein sequence ID" value="AAC68425"/>
    <property type="gene ID" value="CT_828"/>
</dbReference>
<dbReference type="GeneID" id="884627"/>
<dbReference type="KEGG" id="ctr:CT_828"/>
<dbReference type="PATRIC" id="fig|272561.5.peg.914"/>
<dbReference type="HOGENOM" id="CLU_035339_1_1_0"/>
<dbReference type="InParanoid" id="O84835"/>
<dbReference type="OrthoDB" id="9766544at2"/>
<dbReference type="BioCyc" id="MetaCyc:MONOMER-15784"/>
<dbReference type="BRENDA" id="1.17.4.1">
    <property type="organism ID" value="1315"/>
</dbReference>
<dbReference type="EvolutionaryTrace" id="O84835"/>
<dbReference type="Proteomes" id="UP000000431">
    <property type="component" value="Chromosome"/>
</dbReference>
<dbReference type="GO" id="GO:0046872">
    <property type="term" value="F:metal ion binding"/>
    <property type="evidence" value="ECO:0007669"/>
    <property type="project" value="UniProtKB-KW"/>
</dbReference>
<dbReference type="GO" id="GO:0004748">
    <property type="term" value="F:ribonucleoside-diphosphate reductase activity, thioredoxin disulfide as acceptor"/>
    <property type="evidence" value="ECO:0007669"/>
    <property type="project" value="UniProtKB-EC"/>
</dbReference>
<dbReference type="GO" id="GO:0009263">
    <property type="term" value="P:deoxyribonucleotide biosynthetic process"/>
    <property type="evidence" value="ECO:0007669"/>
    <property type="project" value="UniProtKB-KW"/>
</dbReference>
<dbReference type="CDD" id="cd01049">
    <property type="entry name" value="RNRR2"/>
    <property type="match status" value="1"/>
</dbReference>
<dbReference type="Gene3D" id="1.10.620.20">
    <property type="entry name" value="Ribonucleotide Reductase, subunit A"/>
    <property type="match status" value="1"/>
</dbReference>
<dbReference type="InterPro" id="IPR009078">
    <property type="entry name" value="Ferritin-like_SF"/>
</dbReference>
<dbReference type="InterPro" id="IPR012348">
    <property type="entry name" value="RNR-like"/>
</dbReference>
<dbReference type="InterPro" id="IPR033909">
    <property type="entry name" value="RNR_small"/>
</dbReference>
<dbReference type="InterPro" id="IPR000358">
    <property type="entry name" value="RNR_small_fam"/>
</dbReference>
<dbReference type="NCBIfam" id="NF005550">
    <property type="entry name" value="PRK07209.1"/>
    <property type="match status" value="1"/>
</dbReference>
<dbReference type="NCBIfam" id="NF007186">
    <property type="entry name" value="PRK09614.1-5"/>
    <property type="match status" value="1"/>
</dbReference>
<dbReference type="PANTHER" id="PTHR23409">
    <property type="entry name" value="RIBONUCLEOSIDE-DIPHOSPHATE REDUCTASE SMALL CHAIN"/>
    <property type="match status" value="1"/>
</dbReference>
<dbReference type="PANTHER" id="PTHR23409:SF18">
    <property type="entry name" value="RIBONUCLEOSIDE-DIPHOSPHATE REDUCTASE SUBUNIT M2"/>
    <property type="match status" value="1"/>
</dbReference>
<dbReference type="Pfam" id="PF00268">
    <property type="entry name" value="Ribonuc_red_sm"/>
    <property type="match status" value="1"/>
</dbReference>
<dbReference type="PIRSF" id="PIRSF000355">
    <property type="entry name" value="NrdB"/>
    <property type="match status" value="1"/>
</dbReference>
<dbReference type="SUPFAM" id="SSF47240">
    <property type="entry name" value="Ferritin-like"/>
    <property type="match status" value="1"/>
</dbReference>
<evidence type="ECO:0000250" key="1"/>
<evidence type="ECO:0000305" key="2"/>
<evidence type="ECO:0007829" key="3">
    <source>
        <dbReference type="PDB" id="1SYY"/>
    </source>
</evidence>
<evidence type="ECO:0007829" key="4">
    <source>
        <dbReference type="PDB" id="4M1H"/>
    </source>
</evidence>
<accession>O84835</accession>
<proteinExistence type="evidence at protein level"/>
<protein>
    <recommendedName>
        <fullName>Ribonucleoside-diphosphate reductase subunit beta</fullName>
        <ecNumber>1.17.4.1</ecNumber>
    </recommendedName>
    <alternativeName>
        <fullName>Ribonucleotide reductase small subunit</fullName>
    </alternativeName>
</protein>
<reference key="1">
    <citation type="journal article" date="1998" name="Science">
        <title>Genome sequence of an obligate intracellular pathogen of humans: Chlamydia trachomatis.</title>
        <authorList>
            <person name="Stephens R.S."/>
            <person name="Kalman S."/>
            <person name="Lammel C.J."/>
            <person name="Fan J."/>
            <person name="Marathe R."/>
            <person name="Aravind L."/>
            <person name="Mitchell W.P."/>
            <person name="Olinger L."/>
            <person name="Tatusov R.L."/>
            <person name="Zhao Q."/>
            <person name="Koonin E.V."/>
            <person name="Davis R.W."/>
        </authorList>
    </citation>
    <scope>NUCLEOTIDE SEQUENCE [LARGE SCALE GENOMIC DNA]</scope>
    <source>
        <strain>ATCC VR-885 / DSM 19411 / UW-3/Cx</strain>
    </source>
</reference>
<sequence length="346" mass="40516">MQADILDGKQKRVNLNSKRLVNCNQVDVNQLVPIKYKWAWEHYLNGCANNWLPTEIPMGKDIELWKSDRLSEDERRVILLNLGFFSTAESLVGNNIVLAIFKHVTNPEARQYLLRQAFEEAVHTHTFLYICESLGLDEKEIFNAYNERAAIKAKDDFQMEITGKVLDPNFRTDSVEGLQEFVKNLVGYYIIMEGIFFYSGFVMILSFHRQNKMIGIGEQYQYILRDETIHLNFGIDLINGIKEENPEIWTPELQQEIVELIKRAVDLEIEYAQDCLPRGILGLRASMFIDYVQHIADRRLERIGLKPIYHTKNPFPWMSETIDLNKEKNFFETRVIEYQHAASLTW</sequence>
<gene>
    <name type="primary">nrdB</name>
    <name type="ordered locus">CT_828</name>
</gene>